<comment type="function">
    <text evidence="1">Negative regulator of FtsZ ring formation; modulates the frequency and position of FtsZ ring formation. Inhibits FtsZ ring formation at polar sites. Interacts either with FtsZ or with one of its binding partners to promote depolymerization.</text>
</comment>
<comment type="subcellular location">
    <subcellularLocation>
        <location evidence="1">Cell membrane</location>
        <topology evidence="1">Single-pass membrane protein</topology>
    </subcellularLocation>
    <text evidence="1">Colocalized with FtsZ to the nascent septal site.</text>
</comment>
<comment type="similarity">
    <text evidence="1">Belongs to the EzrA family.</text>
</comment>
<sequence length="575" mass="66522">MSNGQLIYLMVAIAVILVLAYVVAIFLRKRNEGRLEALEERKEELYNLPVNDEVEAVKNMHLIGQSQVAFREWNQKWVDLSLNSFADIENNLFEAEGYNHSFRFLKASHQIDQIESQITLIDEDIAAIRNALADLEKQESKNSGRVLHALDLFEELQHRVAENSEQYGQALDEIEKQLENIQSEFSQFVTLNSSGDPVEAAVILDNTENHILALSHIVDRVPALVTTLSTELPDQLQDLESGYRKLIDANYHFVETDIEARFHLLYEAFKKNQENIRQLELDNAEYENGQAQEEINALYDIFTREIAAQKVVENLLATLPTYLQHMKENNTLLGEDIARLNKTYLLPETAASHVRRIQTELESFEAAIVEVTSNQEEPTQAYSVLEENLEDLQTQLKDIEDEQISVSERLTQIEKDDINARQKANVYVNRLHTIKRYMEKRNLPGIPQTFLKLFFTASNNTEDLMVELEQKMINIESVTRVLEIATNDMEALETETYNIVQYATLTEQLLQYSNRYRSFDERIQEAFNEALDIFEKEFDYHASFDKISQALEVAEPGVTNRFVTSYEKTRETIRF</sequence>
<reference key="1">
    <citation type="journal article" date="2010" name="Genome Biol.">
        <title>Structure and dynamics of the pan-genome of Streptococcus pneumoniae and closely related species.</title>
        <authorList>
            <person name="Donati C."/>
            <person name="Hiller N.L."/>
            <person name="Tettelin H."/>
            <person name="Muzzi A."/>
            <person name="Croucher N.J."/>
            <person name="Angiuoli S.V."/>
            <person name="Oggioni M."/>
            <person name="Dunning Hotopp J.C."/>
            <person name="Hu F.Z."/>
            <person name="Riley D.R."/>
            <person name="Covacci A."/>
            <person name="Mitchell T.J."/>
            <person name="Bentley S.D."/>
            <person name="Kilian M."/>
            <person name="Ehrlich G.D."/>
            <person name="Rappuoli R."/>
            <person name="Moxon E.R."/>
            <person name="Masignani V."/>
        </authorList>
    </citation>
    <scope>NUCLEOTIDE SEQUENCE [LARGE SCALE GENOMIC DNA]</scope>
    <source>
        <strain>JJA</strain>
    </source>
</reference>
<feature type="chain" id="PRO_1000148075" description="Septation ring formation regulator EzrA">
    <location>
        <begin position="1"/>
        <end position="575"/>
    </location>
</feature>
<feature type="topological domain" description="Extracellular" evidence="1">
    <location>
        <begin position="1"/>
        <end position="8"/>
    </location>
</feature>
<feature type="transmembrane region" description="Helical" evidence="1">
    <location>
        <begin position="9"/>
        <end position="27"/>
    </location>
</feature>
<feature type="topological domain" description="Cytoplasmic" evidence="1">
    <location>
        <begin position="28"/>
        <end position="575"/>
    </location>
</feature>
<feature type="coiled-coil region" evidence="1">
    <location>
        <begin position="110"/>
        <end position="191"/>
    </location>
</feature>
<feature type="coiled-coil region" evidence="1">
    <location>
        <begin position="265"/>
        <end position="301"/>
    </location>
</feature>
<feature type="coiled-coil region" evidence="1">
    <location>
        <begin position="354"/>
        <end position="416"/>
    </location>
</feature>
<feature type="coiled-coil region" evidence="1">
    <location>
        <begin position="456"/>
        <end position="526"/>
    </location>
</feature>
<name>EZRA_STRZJ</name>
<proteinExistence type="inferred from homology"/>
<dbReference type="EMBL" id="CP000919">
    <property type="protein sequence ID" value="ACO19682.1"/>
    <property type="molecule type" value="Genomic_DNA"/>
</dbReference>
<dbReference type="RefSeq" id="WP_000064817.1">
    <property type="nucleotide sequence ID" value="NC_012466.1"/>
</dbReference>
<dbReference type="SMR" id="C1CDG4"/>
<dbReference type="KEGG" id="sjj:SPJ_0753"/>
<dbReference type="HOGENOM" id="CLU_034079_2_0_9"/>
<dbReference type="Proteomes" id="UP000002206">
    <property type="component" value="Chromosome"/>
</dbReference>
<dbReference type="GO" id="GO:0005886">
    <property type="term" value="C:plasma membrane"/>
    <property type="evidence" value="ECO:0007669"/>
    <property type="project" value="UniProtKB-SubCell"/>
</dbReference>
<dbReference type="GO" id="GO:0005940">
    <property type="term" value="C:septin ring"/>
    <property type="evidence" value="ECO:0007669"/>
    <property type="project" value="InterPro"/>
</dbReference>
<dbReference type="GO" id="GO:0000917">
    <property type="term" value="P:division septum assembly"/>
    <property type="evidence" value="ECO:0007669"/>
    <property type="project" value="UniProtKB-KW"/>
</dbReference>
<dbReference type="GO" id="GO:0000921">
    <property type="term" value="P:septin ring assembly"/>
    <property type="evidence" value="ECO:0007669"/>
    <property type="project" value="InterPro"/>
</dbReference>
<dbReference type="HAMAP" id="MF_00728">
    <property type="entry name" value="EzrA"/>
    <property type="match status" value="1"/>
</dbReference>
<dbReference type="InterPro" id="IPR010379">
    <property type="entry name" value="EzrA"/>
</dbReference>
<dbReference type="NCBIfam" id="NF003410">
    <property type="entry name" value="PRK04778.1-4"/>
    <property type="match status" value="1"/>
</dbReference>
<dbReference type="Pfam" id="PF06160">
    <property type="entry name" value="EzrA"/>
    <property type="match status" value="1"/>
</dbReference>
<organism>
    <name type="scientific">Streptococcus pneumoniae (strain JJA)</name>
    <dbReference type="NCBI Taxonomy" id="488222"/>
    <lineage>
        <taxon>Bacteria</taxon>
        <taxon>Bacillati</taxon>
        <taxon>Bacillota</taxon>
        <taxon>Bacilli</taxon>
        <taxon>Lactobacillales</taxon>
        <taxon>Streptococcaceae</taxon>
        <taxon>Streptococcus</taxon>
    </lineage>
</organism>
<protein>
    <recommendedName>
        <fullName evidence="1">Septation ring formation regulator EzrA</fullName>
    </recommendedName>
</protein>
<accession>C1CDG4</accession>
<evidence type="ECO:0000255" key="1">
    <source>
        <dbReference type="HAMAP-Rule" id="MF_00728"/>
    </source>
</evidence>
<keyword id="KW-0131">Cell cycle</keyword>
<keyword id="KW-0132">Cell division</keyword>
<keyword id="KW-1003">Cell membrane</keyword>
<keyword id="KW-0175">Coiled coil</keyword>
<keyword id="KW-0472">Membrane</keyword>
<keyword id="KW-0717">Septation</keyword>
<keyword id="KW-0812">Transmembrane</keyword>
<keyword id="KW-1133">Transmembrane helix</keyword>
<gene>
    <name evidence="1" type="primary">ezrA</name>
    <name type="ordered locus">SPJ_0753</name>
</gene>